<keyword id="KW-0378">Hydrolase</keyword>
<keyword id="KW-0460">Magnesium</keyword>
<keyword id="KW-0464">Manganese</keyword>
<keyword id="KW-0479">Metal-binding</keyword>
<keyword id="KW-0520">NAD</keyword>
<keyword id="KW-0862">Zinc</keyword>
<proteinExistence type="inferred from homology"/>
<organism>
    <name type="scientific">Vibrio vulnificus (strain CMCP6)</name>
    <dbReference type="NCBI Taxonomy" id="216895"/>
    <lineage>
        <taxon>Bacteria</taxon>
        <taxon>Pseudomonadati</taxon>
        <taxon>Pseudomonadota</taxon>
        <taxon>Gammaproteobacteria</taxon>
        <taxon>Vibrionales</taxon>
        <taxon>Vibrionaceae</taxon>
        <taxon>Vibrio</taxon>
    </lineage>
</organism>
<protein>
    <recommendedName>
        <fullName evidence="1">NAD-capped RNA hydrolase NudC</fullName>
        <shortName evidence="1">DeNADding enzyme NudC</shortName>
        <ecNumber evidence="1">3.6.1.-</ecNumber>
    </recommendedName>
    <alternativeName>
        <fullName evidence="1">NADH pyrophosphatase</fullName>
        <ecNumber evidence="1">3.6.1.22</ecNumber>
    </alternativeName>
</protein>
<comment type="function">
    <text evidence="1">mRNA decapping enzyme that specifically removes the nicotinamide adenine dinucleotide (NAD) cap from a subset of mRNAs by hydrolyzing the diphosphate linkage to produce nicotinamide mononucleotide (NMN) and 5' monophosphate mRNA. The NAD-cap is present at the 5'-end of some mRNAs and stabilizes RNA against 5'-processing. Has preference for mRNAs with a 5'-end purine. Catalyzes the hydrolysis of a broad range of dinucleotide pyrophosphates.</text>
</comment>
<comment type="catalytic activity">
    <reaction evidence="1">
        <text>a 5'-end NAD(+)-phospho-ribonucleoside in mRNA + H2O = a 5'-end phospho-adenosine-phospho-ribonucleoside in mRNA + beta-nicotinamide D-ribonucleotide + 2 H(+)</text>
        <dbReference type="Rhea" id="RHEA:60876"/>
        <dbReference type="Rhea" id="RHEA-COMP:15698"/>
        <dbReference type="Rhea" id="RHEA-COMP:15719"/>
        <dbReference type="ChEBI" id="CHEBI:14649"/>
        <dbReference type="ChEBI" id="CHEBI:15377"/>
        <dbReference type="ChEBI" id="CHEBI:15378"/>
        <dbReference type="ChEBI" id="CHEBI:144029"/>
        <dbReference type="ChEBI" id="CHEBI:144051"/>
    </reaction>
    <physiologicalReaction direction="left-to-right" evidence="1">
        <dbReference type="Rhea" id="RHEA:60877"/>
    </physiologicalReaction>
</comment>
<comment type="catalytic activity">
    <reaction evidence="1">
        <text>NAD(+) + H2O = beta-nicotinamide D-ribonucleotide + AMP + 2 H(+)</text>
        <dbReference type="Rhea" id="RHEA:11800"/>
        <dbReference type="ChEBI" id="CHEBI:14649"/>
        <dbReference type="ChEBI" id="CHEBI:15377"/>
        <dbReference type="ChEBI" id="CHEBI:15378"/>
        <dbReference type="ChEBI" id="CHEBI:57540"/>
        <dbReference type="ChEBI" id="CHEBI:456215"/>
        <dbReference type="EC" id="3.6.1.22"/>
    </reaction>
</comment>
<comment type="catalytic activity">
    <reaction evidence="1">
        <text>NADH + H2O = reduced beta-nicotinamide D-ribonucleotide + AMP + 2 H(+)</text>
        <dbReference type="Rhea" id="RHEA:48868"/>
        <dbReference type="ChEBI" id="CHEBI:15377"/>
        <dbReference type="ChEBI" id="CHEBI:15378"/>
        <dbReference type="ChEBI" id="CHEBI:57945"/>
        <dbReference type="ChEBI" id="CHEBI:90832"/>
        <dbReference type="ChEBI" id="CHEBI:456215"/>
        <dbReference type="EC" id="3.6.1.22"/>
    </reaction>
</comment>
<comment type="cofactor">
    <cofactor evidence="1">
        <name>Mg(2+)</name>
        <dbReference type="ChEBI" id="CHEBI:18420"/>
    </cofactor>
    <cofactor evidence="1">
        <name>Mn(2+)</name>
        <dbReference type="ChEBI" id="CHEBI:29035"/>
    </cofactor>
    <text evidence="1">Divalent metal cations. Mg(2+) or Mn(2+).</text>
</comment>
<comment type="cofactor">
    <cofactor evidence="1">
        <name>Zn(2+)</name>
        <dbReference type="ChEBI" id="CHEBI:29105"/>
    </cofactor>
    <text evidence="1">Binds 1 zinc ion per subunit.</text>
</comment>
<comment type="subunit">
    <text evidence="1">Homodimer.</text>
</comment>
<comment type="similarity">
    <text evidence="1">Belongs to the Nudix hydrolase family. NudC subfamily.</text>
</comment>
<evidence type="ECO:0000255" key="1">
    <source>
        <dbReference type="HAMAP-Rule" id="MF_00297"/>
    </source>
</evidence>
<name>NUDC_VIBVU</name>
<feature type="chain" id="PRO_0000056980" description="NAD-capped RNA hydrolase NudC">
    <location>
        <begin position="1"/>
        <end position="261"/>
    </location>
</feature>
<feature type="domain" description="Nudix hydrolase" evidence="1">
    <location>
        <begin position="130"/>
        <end position="253"/>
    </location>
</feature>
<feature type="short sequence motif" description="Nudix box" evidence="1">
    <location>
        <begin position="164"/>
        <end position="185"/>
    </location>
</feature>
<feature type="binding site" evidence="1">
    <location>
        <position position="74"/>
    </location>
    <ligand>
        <name>substrate</name>
    </ligand>
</feature>
<feature type="binding site" evidence="1">
    <location>
        <position position="103"/>
    </location>
    <ligand>
        <name>Zn(2+)</name>
        <dbReference type="ChEBI" id="CHEBI:29105"/>
    </ligand>
</feature>
<feature type="binding site" evidence="1">
    <location>
        <position position="106"/>
    </location>
    <ligand>
        <name>Zn(2+)</name>
        <dbReference type="ChEBI" id="CHEBI:29105"/>
    </ligand>
</feature>
<feature type="binding site" evidence="1">
    <location>
        <position position="121"/>
    </location>
    <ligand>
        <name>Zn(2+)</name>
        <dbReference type="ChEBI" id="CHEBI:29105"/>
    </ligand>
</feature>
<feature type="binding site" evidence="1">
    <location>
        <position position="124"/>
    </location>
    <ligand>
        <name>Zn(2+)</name>
        <dbReference type="ChEBI" id="CHEBI:29105"/>
    </ligand>
</feature>
<feature type="binding site" evidence="1">
    <location>
        <position position="129"/>
    </location>
    <ligand>
        <name>substrate</name>
    </ligand>
</feature>
<feature type="binding site" evidence="1">
    <location>
        <position position="163"/>
    </location>
    <ligand>
        <name>a divalent metal cation</name>
        <dbReference type="ChEBI" id="CHEBI:60240"/>
        <label>1</label>
    </ligand>
</feature>
<feature type="binding site" evidence="1">
    <location>
        <position position="179"/>
    </location>
    <ligand>
        <name>a divalent metal cation</name>
        <dbReference type="ChEBI" id="CHEBI:60240"/>
        <label>2</label>
    </ligand>
</feature>
<feature type="binding site" evidence="1">
    <location>
        <position position="179"/>
    </location>
    <ligand>
        <name>a divalent metal cation</name>
        <dbReference type="ChEBI" id="CHEBI:60240"/>
        <label>3</label>
    </ligand>
</feature>
<feature type="binding site" evidence="1">
    <location>
        <position position="183"/>
    </location>
    <ligand>
        <name>a divalent metal cation</name>
        <dbReference type="ChEBI" id="CHEBI:60240"/>
        <label>1</label>
    </ligand>
</feature>
<feature type="binding site" evidence="1">
    <location>
        <position position="183"/>
    </location>
    <ligand>
        <name>a divalent metal cation</name>
        <dbReference type="ChEBI" id="CHEBI:60240"/>
        <label>3</label>
    </ligand>
</feature>
<feature type="binding site" evidence="1">
    <location>
        <begin position="197"/>
        <end position="204"/>
    </location>
    <ligand>
        <name>substrate</name>
    </ligand>
</feature>
<feature type="binding site" evidence="1">
    <location>
        <position position="224"/>
    </location>
    <ligand>
        <name>a divalent metal cation</name>
        <dbReference type="ChEBI" id="CHEBI:60240"/>
        <label>1</label>
    </ligand>
</feature>
<feature type="binding site" evidence="1">
    <location>
        <position position="224"/>
    </location>
    <ligand>
        <name>a divalent metal cation</name>
        <dbReference type="ChEBI" id="CHEBI:60240"/>
        <label>3</label>
    </ligand>
</feature>
<feature type="binding site" evidence="1">
    <location>
        <position position="246"/>
    </location>
    <ligand>
        <name>substrate</name>
    </ligand>
</feature>
<gene>
    <name evidence="1" type="primary">nudC</name>
    <name type="ordered locus">VV1_1214</name>
</gene>
<accession>Q8DD17</accession>
<dbReference type="EC" id="3.6.1.-" evidence="1"/>
<dbReference type="EC" id="3.6.1.22" evidence="1"/>
<dbReference type="EMBL" id="AE016795">
    <property type="protein sequence ID" value="AAO09674.1"/>
    <property type="molecule type" value="Genomic_DNA"/>
</dbReference>
<dbReference type="RefSeq" id="WP_011079204.1">
    <property type="nucleotide sequence ID" value="NC_004459.3"/>
</dbReference>
<dbReference type="SMR" id="Q8DD17"/>
<dbReference type="KEGG" id="vvu:VV1_1214"/>
<dbReference type="HOGENOM" id="CLU_037162_0_1_6"/>
<dbReference type="Proteomes" id="UP000002275">
    <property type="component" value="Chromosome 1"/>
</dbReference>
<dbReference type="GO" id="GO:0005829">
    <property type="term" value="C:cytosol"/>
    <property type="evidence" value="ECO:0007669"/>
    <property type="project" value="TreeGrafter"/>
</dbReference>
<dbReference type="GO" id="GO:0000287">
    <property type="term" value="F:magnesium ion binding"/>
    <property type="evidence" value="ECO:0007669"/>
    <property type="project" value="UniProtKB-UniRule"/>
</dbReference>
<dbReference type="GO" id="GO:0030145">
    <property type="term" value="F:manganese ion binding"/>
    <property type="evidence" value="ECO:0007669"/>
    <property type="project" value="UniProtKB-UniRule"/>
</dbReference>
<dbReference type="GO" id="GO:0000210">
    <property type="term" value="F:NAD+ diphosphatase activity"/>
    <property type="evidence" value="ECO:0007669"/>
    <property type="project" value="UniProtKB-UniRule"/>
</dbReference>
<dbReference type="GO" id="GO:0035529">
    <property type="term" value="F:NADH pyrophosphatase activity"/>
    <property type="evidence" value="ECO:0007669"/>
    <property type="project" value="TreeGrafter"/>
</dbReference>
<dbReference type="GO" id="GO:0110153">
    <property type="term" value="F:RNA NAD-cap (NMN-forming) hydrolase activity"/>
    <property type="evidence" value="ECO:0007669"/>
    <property type="project" value="RHEA"/>
</dbReference>
<dbReference type="GO" id="GO:0008270">
    <property type="term" value="F:zinc ion binding"/>
    <property type="evidence" value="ECO:0007669"/>
    <property type="project" value="UniProtKB-UniRule"/>
</dbReference>
<dbReference type="GO" id="GO:0019677">
    <property type="term" value="P:NAD catabolic process"/>
    <property type="evidence" value="ECO:0007669"/>
    <property type="project" value="TreeGrafter"/>
</dbReference>
<dbReference type="GO" id="GO:0006734">
    <property type="term" value="P:NADH metabolic process"/>
    <property type="evidence" value="ECO:0007669"/>
    <property type="project" value="TreeGrafter"/>
</dbReference>
<dbReference type="GO" id="GO:0006742">
    <property type="term" value="P:NADP catabolic process"/>
    <property type="evidence" value="ECO:0007669"/>
    <property type="project" value="TreeGrafter"/>
</dbReference>
<dbReference type="CDD" id="cd03429">
    <property type="entry name" value="NUDIX_NADH_pyrophosphatase_Nudt13"/>
    <property type="match status" value="1"/>
</dbReference>
<dbReference type="FunFam" id="3.90.79.10:FF:000004">
    <property type="entry name" value="NADH pyrophosphatase"/>
    <property type="match status" value="1"/>
</dbReference>
<dbReference type="Gene3D" id="3.90.79.20">
    <property type="match status" value="1"/>
</dbReference>
<dbReference type="Gene3D" id="3.90.79.10">
    <property type="entry name" value="Nucleoside Triphosphate Pyrophosphohydrolase"/>
    <property type="match status" value="1"/>
</dbReference>
<dbReference type="HAMAP" id="MF_00297">
    <property type="entry name" value="Nudix_NudC"/>
    <property type="match status" value="1"/>
</dbReference>
<dbReference type="InterPro" id="IPR050241">
    <property type="entry name" value="NAD-cap_RNA_hydrolase_NudC"/>
</dbReference>
<dbReference type="InterPro" id="IPR049734">
    <property type="entry name" value="NudC-like_C"/>
</dbReference>
<dbReference type="InterPro" id="IPR020476">
    <property type="entry name" value="Nudix_hydrolase"/>
</dbReference>
<dbReference type="InterPro" id="IPR015797">
    <property type="entry name" value="NUDIX_hydrolase-like_dom_sf"/>
</dbReference>
<dbReference type="InterPro" id="IPR020084">
    <property type="entry name" value="NUDIX_hydrolase_CS"/>
</dbReference>
<dbReference type="InterPro" id="IPR000086">
    <property type="entry name" value="NUDIX_hydrolase_dom"/>
</dbReference>
<dbReference type="InterPro" id="IPR022925">
    <property type="entry name" value="RNA_Hydrolase_NudC"/>
</dbReference>
<dbReference type="InterPro" id="IPR015376">
    <property type="entry name" value="Znr_NADH_PPase"/>
</dbReference>
<dbReference type="NCBIfam" id="NF001299">
    <property type="entry name" value="PRK00241.1"/>
    <property type="match status" value="1"/>
</dbReference>
<dbReference type="PANTHER" id="PTHR42904:SF6">
    <property type="entry name" value="NAD-CAPPED RNA HYDROLASE NUDT12"/>
    <property type="match status" value="1"/>
</dbReference>
<dbReference type="PANTHER" id="PTHR42904">
    <property type="entry name" value="NUDIX HYDROLASE, NUDC SUBFAMILY"/>
    <property type="match status" value="1"/>
</dbReference>
<dbReference type="Pfam" id="PF00293">
    <property type="entry name" value="NUDIX"/>
    <property type="match status" value="1"/>
</dbReference>
<dbReference type="Pfam" id="PF09297">
    <property type="entry name" value="Zn_ribbon_NUD"/>
    <property type="match status" value="1"/>
</dbReference>
<dbReference type="PRINTS" id="PR00502">
    <property type="entry name" value="NUDIXFAMILY"/>
</dbReference>
<dbReference type="SUPFAM" id="SSF55811">
    <property type="entry name" value="Nudix"/>
    <property type="match status" value="1"/>
</dbReference>
<dbReference type="PROSITE" id="PS51462">
    <property type="entry name" value="NUDIX"/>
    <property type="match status" value="1"/>
</dbReference>
<dbReference type="PROSITE" id="PS00893">
    <property type="entry name" value="NUDIX_BOX"/>
    <property type="match status" value="1"/>
</dbReference>
<sequence>MLSNSDSKHGQKAYWCVVSGSDLWLVDGQLPLATSNELNLVAEKAQKIGSYNNHPVMWLNEADVEQSLEMHSLRECLHFPEPLFLLMSKAIQYGHMTQTMRFCPQCGGRNHLNHNQLAMQCGECRTLHYPRIFPCIIVAVRKQQHILLAQHPRHRSGMYTVIAGFVEVGETLEQCVAREVKEETGIEVTNIRYFGSQPWAFPSSMMMAFLADYHAGELKPDYSELADAKWFTSDNLPPVAPTGTIARALIEQTLLNMRSDS</sequence>
<reference key="1">
    <citation type="submission" date="2002-12" db="EMBL/GenBank/DDBJ databases">
        <title>Complete genome sequence of Vibrio vulnificus CMCP6.</title>
        <authorList>
            <person name="Rhee J.H."/>
            <person name="Kim S.Y."/>
            <person name="Chung S.S."/>
            <person name="Kim J.J."/>
            <person name="Moon Y.H."/>
            <person name="Jeong H."/>
            <person name="Choy H.E."/>
        </authorList>
    </citation>
    <scope>NUCLEOTIDE SEQUENCE [LARGE SCALE GENOMIC DNA]</scope>
    <source>
        <strain>CMCP6</strain>
    </source>
</reference>